<evidence type="ECO:0000255" key="1">
    <source>
        <dbReference type="HAMAP-Rule" id="MF_00599"/>
    </source>
</evidence>
<keyword id="KW-0131">Cell cycle</keyword>
<keyword id="KW-0132">Cell division</keyword>
<keyword id="KW-0997">Cell inner membrane</keyword>
<keyword id="KW-1003">Cell membrane</keyword>
<keyword id="KW-0175">Coiled coil</keyword>
<keyword id="KW-0472">Membrane</keyword>
<keyword id="KW-0812">Transmembrane</keyword>
<keyword id="KW-1133">Transmembrane helix</keyword>
<reference key="1">
    <citation type="submission" date="2007-11" db="EMBL/GenBank/DDBJ databases">
        <authorList>
            <consortium name="The Salmonella enterica serovar Paratyphi B Genome Sequencing Project"/>
            <person name="McClelland M."/>
            <person name="Sanderson E.K."/>
            <person name="Porwollik S."/>
            <person name="Spieth J."/>
            <person name="Clifton W.S."/>
            <person name="Fulton R."/>
            <person name="Cordes M."/>
            <person name="Wollam A."/>
            <person name="Shah N."/>
            <person name="Pepin K."/>
            <person name="Bhonagiri V."/>
            <person name="Nash W."/>
            <person name="Johnson M."/>
            <person name="Thiruvilangam P."/>
            <person name="Wilson R."/>
        </authorList>
    </citation>
    <scope>NUCLEOTIDE SEQUENCE [LARGE SCALE GENOMIC DNA]</scope>
    <source>
        <strain>ATCC BAA-1250 / SPB7</strain>
    </source>
</reference>
<proteinExistence type="inferred from homology"/>
<gene>
    <name evidence="1" type="primary">ftsB</name>
    <name type="ordered locus">SPAB_03645</name>
</gene>
<feature type="chain" id="PRO_1000082457" description="Cell division protein FtsB">
    <location>
        <begin position="1"/>
        <end position="103"/>
    </location>
</feature>
<feature type="topological domain" description="Cytoplasmic" evidence="1">
    <location>
        <begin position="1"/>
        <end position="3"/>
    </location>
</feature>
<feature type="transmembrane region" description="Helical" evidence="1">
    <location>
        <begin position="4"/>
        <end position="21"/>
    </location>
</feature>
<feature type="topological domain" description="Periplasmic" evidence="1">
    <location>
        <begin position="22"/>
        <end position="103"/>
    </location>
</feature>
<feature type="coiled-coil region" evidence="1">
    <location>
        <begin position="33"/>
        <end position="62"/>
    </location>
</feature>
<dbReference type="EMBL" id="CP000886">
    <property type="protein sequence ID" value="ABX68985.1"/>
    <property type="molecule type" value="Genomic_DNA"/>
</dbReference>
<dbReference type="RefSeq" id="WP_000517480.1">
    <property type="nucleotide sequence ID" value="NC_010102.1"/>
</dbReference>
<dbReference type="SMR" id="A9N2D4"/>
<dbReference type="KEGG" id="spq:SPAB_03645"/>
<dbReference type="PATRIC" id="fig|1016998.12.peg.3432"/>
<dbReference type="HOGENOM" id="CLU_134863_5_2_6"/>
<dbReference type="BioCyc" id="SENT1016998:SPAB_RS14855-MONOMER"/>
<dbReference type="Proteomes" id="UP000008556">
    <property type="component" value="Chromosome"/>
</dbReference>
<dbReference type="GO" id="GO:0032153">
    <property type="term" value="C:cell division site"/>
    <property type="evidence" value="ECO:0007669"/>
    <property type="project" value="UniProtKB-UniRule"/>
</dbReference>
<dbReference type="GO" id="GO:0030428">
    <property type="term" value="C:cell septum"/>
    <property type="evidence" value="ECO:0007669"/>
    <property type="project" value="TreeGrafter"/>
</dbReference>
<dbReference type="GO" id="GO:0005886">
    <property type="term" value="C:plasma membrane"/>
    <property type="evidence" value="ECO:0007669"/>
    <property type="project" value="UniProtKB-SubCell"/>
</dbReference>
<dbReference type="GO" id="GO:0043093">
    <property type="term" value="P:FtsZ-dependent cytokinesis"/>
    <property type="evidence" value="ECO:0007669"/>
    <property type="project" value="UniProtKB-UniRule"/>
</dbReference>
<dbReference type="FunFam" id="1.20.5.400:FF:000001">
    <property type="entry name" value="Cell division protein FtsB"/>
    <property type="match status" value="1"/>
</dbReference>
<dbReference type="Gene3D" id="1.20.5.400">
    <property type="match status" value="1"/>
</dbReference>
<dbReference type="HAMAP" id="MF_00599">
    <property type="entry name" value="FtsB"/>
    <property type="match status" value="1"/>
</dbReference>
<dbReference type="InterPro" id="IPR023081">
    <property type="entry name" value="Cell_div_FtsB"/>
</dbReference>
<dbReference type="InterPro" id="IPR007060">
    <property type="entry name" value="FtsL/DivIC"/>
</dbReference>
<dbReference type="NCBIfam" id="NF002058">
    <property type="entry name" value="PRK00888.1"/>
    <property type="match status" value="1"/>
</dbReference>
<dbReference type="PANTHER" id="PTHR37485">
    <property type="entry name" value="CELL DIVISION PROTEIN FTSB"/>
    <property type="match status" value="1"/>
</dbReference>
<dbReference type="PANTHER" id="PTHR37485:SF1">
    <property type="entry name" value="CELL DIVISION PROTEIN FTSB"/>
    <property type="match status" value="1"/>
</dbReference>
<dbReference type="Pfam" id="PF04977">
    <property type="entry name" value="DivIC"/>
    <property type="match status" value="1"/>
</dbReference>
<protein>
    <recommendedName>
        <fullName evidence="1">Cell division protein FtsB</fullName>
    </recommendedName>
</protein>
<name>FTSB_SALPB</name>
<comment type="function">
    <text evidence="1">Essential cell division protein. May link together the upstream cell division proteins, which are predominantly cytoplasmic, with the downstream cell division proteins, which are predominantly periplasmic.</text>
</comment>
<comment type="subunit">
    <text evidence="1">Part of a complex composed of FtsB, FtsL and FtsQ.</text>
</comment>
<comment type="subcellular location">
    <subcellularLocation>
        <location evidence="1">Cell inner membrane</location>
        <topology evidence="1">Single-pass type II membrane protein</topology>
    </subcellularLocation>
    <text evidence="1">Localizes to the division septum.</text>
</comment>
<comment type="similarity">
    <text evidence="1">Belongs to the FtsB family.</text>
</comment>
<organism>
    <name type="scientific">Salmonella paratyphi B (strain ATCC BAA-1250 / SPB7)</name>
    <dbReference type="NCBI Taxonomy" id="1016998"/>
    <lineage>
        <taxon>Bacteria</taxon>
        <taxon>Pseudomonadati</taxon>
        <taxon>Pseudomonadota</taxon>
        <taxon>Gammaproteobacteria</taxon>
        <taxon>Enterobacterales</taxon>
        <taxon>Enterobacteriaceae</taxon>
        <taxon>Salmonella</taxon>
    </lineage>
</organism>
<accession>A9N2D4</accession>
<sequence>MGKLTLLLLALLVWLQYSLWFGKNGIHDYSRVNDDVVAQQATNAKLKARNDQLFAEIDDLNGGQEAIEERARNELSMTKPGETFYRLVPDASKRAATAGQTHR</sequence>